<dbReference type="EMBL" id="AE013599">
    <property type="protein sequence ID" value="AAF57268.1"/>
    <property type="molecule type" value="Genomic_DNA"/>
</dbReference>
<dbReference type="EMBL" id="BT011425">
    <property type="protein sequence ID" value="AAR96217.1"/>
    <property type="molecule type" value="mRNA"/>
</dbReference>
<dbReference type="RefSeq" id="NP_610213.1">
    <property type="nucleotide sequence ID" value="NM_136369.2"/>
</dbReference>
<dbReference type="SMR" id="A1Z6L1"/>
<dbReference type="BioGRID" id="61454">
    <property type="interactions" value="1"/>
</dbReference>
<dbReference type="ComplexPortal" id="CPX-8926">
    <property type="entry name" value="TOM40 mitochondrial outer membrane translocase complex, testis-specific variant"/>
</dbReference>
<dbReference type="FunCoup" id="A1Z6L1">
    <property type="interactions" value="688"/>
</dbReference>
<dbReference type="STRING" id="7227.FBpp0085338"/>
<dbReference type="PaxDb" id="7227-FBpp0085338"/>
<dbReference type="DNASU" id="35553"/>
<dbReference type="EnsemblMetazoa" id="FBtr0085994">
    <property type="protein sequence ID" value="FBpp0085338"/>
    <property type="gene ID" value="FBgn0033074"/>
</dbReference>
<dbReference type="GeneID" id="35553"/>
<dbReference type="KEGG" id="dme:Dmel_CG8330"/>
<dbReference type="UCSC" id="CG8330-RA">
    <property type="organism name" value="d. melanogaster"/>
</dbReference>
<dbReference type="AGR" id="FB:FBgn0033074"/>
<dbReference type="CTD" id="35553"/>
<dbReference type="FlyBase" id="FBgn0033074">
    <property type="gene designation" value="tomboy40"/>
</dbReference>
<dbReference type="VEuPathDB" id="VectorBase:FBgn0033074"/>
<dbReference type="eggNOG" id="KOG3296">
    <property type="taxonomic scope" value="Eukaryota"/>
</dbReference>
<dbReference type="HOGENOM" id="CLU_054399_0_0_1"/>
<dbReference type="InParanoid" id="A1Z6L1"/>
<dbReference type="OMA" id="ISGRMNH"/>
<dbReference type="OrthoDB" id="19656at2759"/>
<dbReference type="PhylomeDB" id="A1Z6L1"/>
<dbReference type="BioGRID-ORCS" id="35553">
    <property type="hits" value="0 hits in 3 CRISPR screens"/>
</dbReference>
<dbReference type="GenomeRNAi" id="35553"/>
<dbReference type="PRO" id="PR:A1Z6L1"/>
<dbReference type="Proteomes" id="UP000000803">
    <property type="component" value="Chromosome 2R"/>
</dbReference>
<dbReference type="Bgee" id="FBgn0033074">
    <property type="expression patterns" value="Expressed in early elongation stage spermatid (Drosophila) in testis and 35 other cell types or tissues"/>
</dbReference>
<dbReference type="ExpressionAtlas" id="A1Z6L1">
    <property type="expression patterns" value="baseline and differential"/>
</dbReference>
<dbReference type="GO" id="GO:0005742">
    <property type="term" value="C:mitochondrial outer membrane translocase complex"/>
    <property type="evidence" value="ECO:0000314"/>
    <property type="project" value="UniProtKB"/>
</dbReference>
<dbReference type="GO" id="GO:0005739">
    <property type="term" value="C:mitochondrion"/>
    <property type="evidence" value="ECO:0000314"/>
    <property type="project" value="FlyBase"/>
</dbReference>
<dbReference type="GO" id="GO:0046930">
    <property type="term" value="C:pore complex"/>
    <property type="evidence" value="ECO:0007669"/>
    <property type="project" value="UniProtKB-KW"/>
</dbReference>
<dbReference type="GO" id="GO:0015288">
    <property type="term" value="F:porin activity"/>
    <property type="evidence" value="ECO:0007669"/>
    <property type="project" value="UniProtKB-KW"/>
</dbReference>
<dbReference type="GO" id="GO:0008320">
    <property type="term" value="F:protein transmembrane transporter activity"/>
    <property type="evidence" value="ECO:0000318"/>
    <property type="project" value="GO_Central"/>
</dbReference>
<dbReference type="GO" id="GO:0006811">
    <property type="term" value="P:monoatomic ion transport"/>
    <property type="evidence" value="ECO:0007669"/>
    <property type="project" value="UniProtKB-KW"/>
</dbReference>
<dbReference type="GO" id="GO:0030150">
    <property type="term" value="P:protein import into mitochondrial matrix"/>
    <property type="evidence" value="ECO:0000318"/>
    <property type="project" value="GO_Central"/>
</dbReference>
<dbReference type="GO" id="GO:0006626">
    <property type="term" value="P:protein targeting to mitochondrion"/>
    <property type="evidence" value="ECO:0000250"/>
    <property type="project" value="UniProtKB"/>
</dbReference>
<dbReference type="CDD" id="cd07305">
    <property type="entry name" value="Porin3_Tom40"/>
    <property type="match status" value="1"/>
</dbReference>
<dbReference type="FunFam" id="2.40.160.10:FF:000005">
    <property type="entry name" value="mitochondrial import receptor subunit TOM40 homolog"/>
    <property type="match status" value="1"/>
</dbReference>
<dbReference type="Gene3D" id="2.40.160.10">
    <property type="entry name" value="Porin"/>
    <property type="match status" value="1"/>
</dbReference>
<dbReference type="InterPro" id="IPR023614">
    <property type="entry name" value="Porin_dom_sf"/>
</dbReference>
<dbReference type="InterPro" id="IPR027246">
    <property type="entry name" value="Porin_Euk/Tom40"/>
</dbReference>
<dbReference type="InterPro" id="IPR037930">
    <property type="entry name" value="Tom40"/>
</dbReference>
<dbReference type="PANTHER" id="PTHR10802">
    <property type="entry name" value="MITOCHONDRIAL IMPORT RECEPTOR SUBUNIT TOM40"/>
    <property type="match status" value="1"/>
</dbReference>
<dbReference type="Pfam" id="PF01459">
    <property type="entry name" value="Porin_3"/>
    <property type="match status" value="1"/>
</dbReference>
<evidence type="ECO:0000250" key="1">
    <source>
        <dbReference type="UniProtKB" id="Q75Q40"/>
    </source>
</evidence>
<evidence type="ECO:0000255" key="2"/>
<evidence type="ECO:0000256" key="3">
    <source>
        <dbReference type="SAM" id="MobiDB-lite"/>
    </source>
</evidence>
<evidence type="ECO:0000269" key="4">
    <source>
    </source>
</evidence>
<evidence type="ECO:0000303" key="5">
    <source>
    </source>
</evidence>
<evidence type="ECO:0000305" key="6"/>
<evidence type="ECO:0000312" key="7">
    <source>
        <dbReference type="EMBL" id="AAF57268.1"/>
    </source>
</evidence>
<evidence type="ECO:0000312" key="8">
    <source>
        <dbReference type="EMBL" id="AAR96217.1"/>
    </source>
</evidence>
<evidence type="ECO:0000312" key="9">
    <source>
        <dbReference type="FlyBase" id="FBgn0033074"/>
    </source>
</evidence>
<comment type="function">
    <text evidence="1">Channel-forming protein essential for import of protein precursors into mitochondria.</text>
</comment>
<comment type="subunit">
    <text evidence="1">Forms part of the preprotein translocase of the outer mitochondrial membrane (TOM complex). Interacts with mitochondrial targeting sequences (By similarity).</text>
</comment>
<comment type="subcellular location">
    <subcellularLocation>
        <location evidence="4">Mitochondrion outer membrane</location>
        <topology evidence="4">Multi-pass membrane protein</topology>
    </subcellularLocation>
</comment>
<comment type="tissue specificity">
    <text evidence="4">Only expressed in the male germline, detected in primary spermatocytes as well as post-meiotic stages. Not detected in stem cells and spermatogonia near the tip of the testis.</text>
</comment>
<comment type="similarity">
    <text evidence="2">Belongs to the Tom40 family.</text>
</comment>
<reference evidence="7" key="1">
    <citation type="journal article" date="2000" name="Science">
        <title>The genome sequence of Drosophila melanogaster.</title>
        <authorList>
            <person name="Adams M.D."/>
            <person name="Celniker S.E."/>
            <person name="Holt R.A."/>
            <person name="Evans C.A."/>
            <person name="Gocayne J.D."/>
            <person name="Amanatides P.G."/>
            <person name="Scherer S.E."/>
            <person name="Li P.W."/>
            <person name="Hoskins R.A."/>
            <person name="Galle R.F."/>
            <person name="George R.A."/>
            <person name="Lewis S.E."/>
            <person name="Richards S."/>
            <person name="Ashburner M."/>
            <person name="Henderson S.N."/>
            <person name="Sutton G.G."/>
            <person name="Wortman J.R."/>
            <person name="Yandell M.D."/>
            <person name="Zhang Q."/>
            <person name="Chen L.X."/>
            <person name="Brandon R.C."/>
            <person name="Rogers Y.-H.C."/>
            <person name="Blazej R.G."/>
            <person name="Champe M."/>
            <person name="Pfeiffer B.D."/>
            <person name="Wan K.H."/>
            <person name="Doyle C."/>
            <person name="Baxter E.G."/>
            <person name="Helt G."/>
            <person name="Nelson C.R."/>
            <person name="Miklos G.L.G."/>
            <person name="Abril J.F."/>
            <person name="Agbayani A."/>
            <person name="An H.-J."/>
            <person name="Andrews-Pfannkoch C."/>
            <person name="Baldwin D."/>
            <person name="Ballew R.M."/>
            <person name="Basu A."/>
            <person name="Baxendale J."/>
            <person name="Bayraktaroglu L."/>
            <person name="Beasley E.M."/>
            <person name="Beeson K.Y."/>
            <person name="Benos P.V."/>
            <person name="Berman B.P."/>
            <person name="Bhandari D."/>
            <person name="Bolshakov S."/>
            <person name="Borkova D."/>
            <person name="Botchan M.R."/>
            <person name="Bouck J."/>
            <person name="Brokstein P."/>
            <person name="Brottier P."/>
            <person name="Burtis K.C."/>
            <person name="Busam D.A."/>
            <person name="Butler H."/>
            <person name="Cadieu E."/>
            <person name="Center A."/>
            <person name="Chandra I."/>
            <person name="Cherry J.M."/>
            <person name="Cawley S."/>
            <person name="Dahlke C."/>
            <person name="Davenport L.B."/>
            <person name="Davies P."/>
            <person name="de Pablos B."/>
            <person name="Delcher A."/>
            <person name="Deng Z."/>
            <person name="Mays A.D."/>
            <person name="Dew I."/>
            <person name="Dietz S.M."/>
            <person name="Dodson K."/>
            <person name="Doup L.E."/>
            <person name="Downes M."/>
            <person name="Dugan-Rocha S."/>
            <person name="Dunkov B.C."/>
            <person name="Dunn P."/>
            <person name="Durbin K.J."/>
            <person name="Evangelista C.C."/>
            <person name="Ferraz C."/>
            <person name="Ferriera S."/>
            <person name="Fleischmann W."/>
            <person name="Fosler C."/>
            <person name="Gabrielian A.E."/>
            <person name="Garg N.S."/>
            <person name="Gelbart W.M."/>
            <person name="Glasser K."/>
            <person name="Glodek A."/>
            <person name="Gong F."/>
            <person name="Gorrell J.H."/>
            <person name="Gu Z."/>
            <person name="Guan P."/>
            <person name="Harris M."/>
            <person name="Harris N.L."/>
            <person name="Harvey D.A."/>
            <person name="Heiman T.J."/>
            <person name="Hernandez J.R."/>
            <person name="Houck J."/>
            <person name="Hostin D."/>
            <person name="Houston K.A."/>
            <person name="Howland T.J."/>
            <person name="Wei M.-H."/>
            <person name="Ibegwam C."/>
            <person name="Jalali M."/>
            <person name="Kalush F."/>
            <person name="Karpen G.H."/>
            <person name="Ke Z."/>
            <person name="Kennison J.A."/>
            <person name="Ketchum K.A."/>
            <person name="Kimmel B.E."/>
            <person name="Kodira C.D."/>
            <person name="Kraft C.L."/>
            <person name="Kravitz S."/>
            <person name="Kulp D."/>
            <person name="Lai Z."/>
            <person name="Lasko P."/>
            <person name="Lei Y."/>
            <person name="Levitsky A.A."/>
            <person name="Li J.H."/>
            <person name="Li Z."/>
            <person name="Liang Y."/>
            <person name="Lin X."/>
            <person name="Liu X."/>
            <person name="Mattei B."/>
            <person name="McIntosh T.C."/>
            <person name="McLeod M.P."/>
            <person name="McPherson D."/>
            <person name="Merkulov G."/>
            <person name="Milshina N.V."/>
            <person name="Mobarry C."/>
            <person name="Morris J."/>
            <person name="Moshrefi A."/>
            <person name="Mount S.M."/>
            <person name="Moy M."/>
            <person name="Murphy B."/>
            <person name="Murphy L."/>
            <person name="Muzny D.M."/>
            <person name="Nelson D.L."/>
            <person name="Nelson D.R."/>
            <person name="Nelson K.A."/>
            <person name="Nixon K."/>
            <person name="Nusskern D.R."/>
            <person name="Pacleb J.M."/>
            <person name="Palazzolo M."/>
            <person name="Pittman G.S."/>
            <person name="Pan S."/>
            <person name="Pollard J."/>
            <person name="Puri V."/>
            <person name="Reese M.G."/>
            <person name="Reinert K."/>
            <person name="Remington K."/>
            <person name="Saunders R.D.C."/>
            <person name="Scheeler F."/>
            <person name="Shen H."/>
            <person name="Shue B.C."/>
            <person name="Siden-Kiamos I."/>
            <person name="Simpson M."/>
            <person name="Skupski M.P."/>
            <person name="Smith T.J."/>
            <person name="Spier E."/>
            <person name="Spradling A.C."/>
            <person name="Stapleton M."/>
            <person name="Strong R."/>
            <person name="Sun E."/>
            <person name="Svirskas R."/>
            <person name="Tector C."/>
            <person name="Turner R."/>
            <person name="Venter E."/>
            <person name="Wang A.H."/>
            <person name="Wang X."/>
            <person name="Wang Z.-Y."/>
            <person name="Wassarman D.A."/>
            <person name="Weinstock G.M."/>
            <person name="Weissenbach J."/>
            <person name="Williams S.M."/>
            <person name="Woodage T."/>
            <person name="Worley K.C."/>
            <person name="Wu D."/>
            <person name="Yang S."/>
            <person name="Yao Q.A."/>
            <person name="Ye J."/>
            <person name="Yeh R.-F."/>
            <person name="Zaveri J.S."/>
            <person name="Zhan M."/>
            <person name="Zhang G."/>
            <person name="Zhao Q."/>
            <person name="Zheng L."/>
            <person name="Zheng X.H."/>
            <person name="Zhong F.N."/>
            <person name="Zhong W."/>
            <person name="Zhou X."/>
            <person name="Zhu S.C."/>
            <person name="Zhu X."/>
            <person name="Smith H.O."/>
            <person name="Gibbs R.A."/>
            <person name="Myers E.W."/>
            <person name="Rubin G.M."/>
            <person name="Venter J.C."/>
        </authorList>
    </citation>
    <scope>NUCLEOTIDE SEQUENCE [LARGE SCALE GENOMIC DNA]</scope>
    <source>
        <strain>Berkeley</strain>
    </source>
</reference>
<reference evidence="6 7" key="2">
    <citation type="journal article" date="2002" name="Genome Biol.">
        <title>Annotation of the Drosophila melanogaster euchromatic genome: a systematic review.</title>
        <authorList>
            <person name="Misra S."/>
            <person name="Crosby M.A."/>
            <person name="Mungall C.J."/>
            <person name="Matthews B.B."/>
            <person name="Campbell K.S."/>
            <person name="Hradecky P."/>
            <person name="Huang Y."/>
            <person name="Kaminker J.S."/>
            <person name="Millburn G.H."/>
            <person name="Prochnik S.E."/>
            <person name="Smith C.D."/>
            <person name="Tupy J.L."/>
            <person name="Whitfield E.J."/>
            <person name="Bayraktaroglu L."/>
            <person name="Berman B.P."/>
            <person name="Bettencourt B.R."/>
            <person name="Celniker S.E."/>
            <person name="de Grey A.D.N.J."/>
            <person name="Drysdale R.A."/>
            <person name="Harris N.L."/>
            <person name="Richter J."/>
            <person name="Russo S."/>
            <person name="Schroeder A.J."/>
            <person name="Shu S.Q."/>
            <person name="Stapleton M."/>
            <person name="Yamada C."/>
            <person name="Ashburner M."/>
            <person name="Gelbart W.M."/>
            <person name="Rubin G.M."/>
            <person name="Lewis S.E."/>
        </authorList>
    </citation>
    <scope>GENOME REANNOTATION</scope>
    <source>
        <strain>Berkeley</strain>
    </source>
</reference>
<reference evidence="8" key="3">
    <citation type="submission" date="2004-01" db="EMBL/GenBank/DDBJ databases">
        <authorList>
            <person name="Stapleton M."/>
            <person name="Carlson J.W."/>
            <person name="Chavez C."/>
            <person name="Frise E."/>
            <person name="George R.A."/>
            <person name="Pacleb J.M."/>
            <person name="Park S."/>
            <person name="Wan K.H."/>
            <person name="Yu C."/>
            <person name="Rubin G.M."/>
            <person name="Celniker S.E."/>
        </authorList>
    </citation>
    <scope>NUCLEOTIDE SEQUENCE [LARGE SCALE MRNA]</scope>
    <source>
        <strain>Berkeley</strain>
        <tissue>Testis</tissue>
    </source>
</reference>
<reference evidence="6" key="4">
    <citation type="journal article" date="2004" name="FEBS Lett.">
        <title>Germ-line specific variants of components of the mitochondrial outer membrane import machinery in Drosophila.</title>
        <authorList>
            <person name="Hwa J.J."/>
            <person name="Zhu A.J."/>
            <person name="Hiller M.A."/>
            <person name="Kon C.Y."/>
            <person name="Fuller M.T."/>
            <person name="Santel A."/>
        </authorList>
    </citation>
    <scope>SUBCELLULAR LOCATION</scope>
    <scope>TISSUE SPECIFICITY</scope>
</reference>
<keyword id="KW-0406">Ion transport</keyword>
<keyword id="KW-0472">Membrane</keyword>
<keyword id="KW-0496">Mitochondrion</keyword>
<keyword id="KW-1000">Mitochondrion outer membrane</keyword>
<keyword id="KW-0626">Porin</keyword>
<keyword id="KW-0653">Protein transport</keyword>
<keyword id="KW-1185">Reference proteome</keyword>
<keyword id="KW-0812">Transmembrane</keyword>
<keyword id="KW-1134">Transmembrane beta strand</keyword>
<keyword id="KW-0813">Transport</keyword>
<sequence length="340" mass="36983">MGNVMASTADAESSRGRGHLSAGLRLPEAPQYSGGVPPQMVEALKAEAKKPELTNPGTLEELHSRCRDIQANTFEGAKIMVNKGLSNHFQVTHTINMNSAGPSGYRFGATYVGTKQYGPTEAFPVLLGEIDPMGNLNANVIHQLTSRLRCKFASQFQDSKLVGTQLTGDYRGRDYTLTLTMGNPGFFTSSGVFVCQYLQSVTKRLALGSEFAYHYGPNVPGRQVAVLSAVGRYAFGDTVWSCTLGPAGFHLSYYQKASDQLQIGVEVETNIRQQESTATVAYQIDLPKADLVFRGSLDSNWLISGVLEKRLQPLPFSLAISGRMNHQKNSFRLGCGLMIG</sequence>
<organism>
    <name type="scientific">Drosophila melanogaster</name>
    <name type="common">Fruit fly</name>
    <dbReference type="NCBI Taxonomy" id="7227"/>
    <lineage>
        <taxon>Eukaryota</taxon>
        <taxon>Metazoa</taxon>
        <taxon>Ecdysozoa</taxon>
        <taxon>Arthropoda</taxon>
        <taxon>Hexapoda</taxon>
        <taxon>Insecta</taxon>
        <taxon>Pterygota</taxon>
        <taxon>Neoptera</taxon>
        <taxon>Endopterygota</taxon>
        <taxon>Diptera</taxon>
        <taxon>Brachycera</taxon>
        <taxon>Muscomorpha</taxon>
        <taxon>Ephydroidea</taxon>
        <taxon>Drosophilidae</taxon>
        <taxon>Drosophila</taxon>
        <taxon>Sophophora</taxon>
    </lineage>
</organism>
<accession>A1Z6L1</accession>
<accession>Q6NN68</accession>
<gene>
    <name evidence="9" type="primary">tomboy40</name>
    <name type="ORF">CG8330</name>
</gene>
<proteinExistence type="evidence at transcript level"/>
<name>TO402_DROME</name>
<feature type="chain" id="PRO_0000355096" description="Mitochondrial import receptor subunit TOM40 homolog 2">
    <location>
        <begin position="1"/>
        <end position="340"/>
    </location>
</feature>
<feature type="region of interest" description="Disordered" evidence="3">
    <location>
        <begin position="1"/>
        <end position="37"/>
    </location>
</feature>
<feature type="sequence conflict" description="In Ref. 3; AAR96217." evidence="6" ref="3">
    <original>P</original>
    <variation>A</variation>
    <location>
        <position position="27"/>
    </location>
</feature>
<protein>
    <recommendedName>
        <fullName evidence="1 5">Mitochondrial import receptor subunit TOM40 homolog 2</fullName>
    </recommendedName>
    <alternativeName>
        <fullName>Translocase of outer membrane 40 kDa subunit homolog 2</fullName>
    </alternativeName>
</protein>